<feature type="chain" id="PRO_0000241259" description="Aspartyl/glutamyl-tRNA(Asn/Gln) amidotransferase subunit B">
    <location>
        <begin position="1"/>
        <end position="481"/>
    </location>
</feature>
<accession>Q48E91</accession>
<protein>
    <recommendedName>
        <fullName evidence="1">Aspartyl/glutamyl-tRNA(Asn/Gln) amidotransferase subunit B</fullName>
        <shortName evidence="1">Asp/Glu-ADT subunit B</shortName>
        <ecNumber evidence="1">6.3.5.-</ecNumber>
    </recommendedName>
</protein>
<reference key="1">
    <citation type="journal article" date="2005" name="J. Bacteriol.">
        <title>Whole-genome sequence analysis of Pseudomonas syringae pv. phaseolicola 1448A reveals divergence among pathovars in genes involved in virulence and transposition.</title>
        <authorList>
            <person name="Joardar V."/>
            <person name="Lindeberg M."/>
            <person name="Jackson R.W."/>
            <person name="Selengut J."/>
            <person name="Dodson R."/>
            <person name="Brinkac L.M."/>
            <person name="Daugherty S.C."/>
            <person name="DeBoy R.T."/>
            <person name="Durkin A.S."/>
            <person name="Gwinn Giglio M."/>
            <person name="Madupu R."/>
            <person name="Nelson W.C."/>
            <person name="Rosovitz M.J."/>
            <person name="Sullivan S.A."/>
            <person name="Crabtree J."/>
            <person name="Creasy T."/>
            <person name="Davidsen T.M."/>
            <person name="Haft D.H."/>
            <person name="Zafar N."/>
            <person name="Zhou L."/>
            <person name="Halpin R."/>
            <person name="Holley T."/>
            <person name="Khouri H.M."/>
            <person name="Feldblyum T.V."/>
            <person name="White O."/>
            <person name="Fraser C.M."/>
            <person name="Chatterjee A.K."/>
            <person name="Cartinhour S."/>
            <person name="Schneider D."/>
            <person name="Mansfield J.W."/>
            <person name="Collmer A."/>
            <person name="Buell R."/>
        </authorList>
    </citation>
    <scope>NUCLEOTIDE SEQUENCE [LARGE SCALE GENOMIC DNA]</scope>
    <source>
        <strain>1448A / Race 6</strain>
    </source>
</reference>
<sequence>MQWEVVIGLEIHTQLSTQSKIFSGSATTFGSEPNTQASLVDLGMPGVLPVLNKEAVRMAVKFGLAVDAEIGQHNVFARKNYFYPDLPKGYQISQMELPIVGKGHLDITLEDGTVKRIGITRAHLEEDAGKSLHEDFQGMTGIDLNRAGTPLLEIVSEPDMRSAKEAVAYVKAIHAIVRYLGICDGNMAEGSLRCDCNVSIRPKGQVEFGTRCEIKNVNSFRFIEKAINSEIQRQIDLIEDGGKVIQQTRLYDPNTNETRAMRSKEEANDYRYFPDPDLLPVIIEDSFLEETRATLPELPPQKRERFQSQFGLSTYDASVLASSREQADYFEQVVSISGDAKLAANWVMVELGSLLNKQGLEIEQSPVSAEQLGGMLKRITDNTISGKIAKMVFEAMANGEGSADEVIDKRGLKQVTDSGAIESMLDEMLAANAEQVEQYRAADEAKRGKMFGFFVGQAMKASKGKANPQQVNELLKAKLEG</sequence>
<dbReference type="EC" id="6.3.5.-" evidence="1"/>
<dbReference type="EMBL" id="CP000058">
    <property type="protein sequence ID" value="AAZ36614.1"/>
    <property type="molecule type" value="Genomic_DNA"/>
</dbReference>
<dbReference type="RefSeq" id="WP_002555110.1">
    <property type="nucleotide sequence ID" value="NC_005773.3"/>
</dbReference>
<dbReference type="SMR" id="Q48E91"/>
<dbReference type="GeneID" id="61871749"/>
<dbReference type="KEGG" id="psp:PSPPH_4175"/>
<dbReference type="eggNOG" id="COG0064">
    <property type="taxonomic scope" value="Bacteria"/>
</dbReference>
<dbReference type="HOGENOM" id="CLU_019240_0_0_6"/>
<dbReference type="Proteomes" id="UP000000551">
    <property type="component" value="Chromosome"/>
</dbReference>
<dbReference type="GO" id="GO:0050566">
    <property type="term" value="F:asparaginyl-tRNA synthase (glutamine-hydrolyzing) activity"/>
    <property type="evidence" value="ECO:0007669"/>
    <property type="project" value="RHEA"/>
</dbReference>
<dbReference type="GO" id="GO:0005524">
    <property type="term" value="F:ATP binding"/>
    <property type="evidence" value="ECO:0007669"/>
    <property type="project" value="UniProtKB-KW"/>
</dbReference>
<dbReference type="GO" id="GO:0050567">
    <property type="term" value="F:glutaminyl-tRNA synthase (glutamine-hydrolyzing) activity"/>
    <property type="evidence" value="ECO:0007669"/>
    <property type="project" value="UniProtKB-UniRule"/>
</dbReference>
<dbReference type="GO" id="GO:0070681">
    <property type="term" value="P:glutaminyl-tRNAGln biosynthesis via transamidation"/>
    <property type="evidence" value="ECO:0007669"/>
    <property type="project" value="TreeGrafter"/>
</dbReference>
<dbReference type="GO" id="GO:0006412">
    <property type="term" value="P:translation"/>
    <property type="evidence" value="ECO:0007669"/>
    <property type="project" value="UniProtKB-UniRule"/>
</dbReference>
<dbReference type="FunFam" id="1.10.10.410:FF:000001">
    <property type="entry name" value="Aspartyl/glutamyl-tRNA(Asn/Gln) amidotransferase subunit B"/>
    <property type="match status" value="1"/>
</dbReference>
<dbReference type="FunFam" id="1.10.150.380:FF:000001">
    <property type="entry name" value="Aspartyl/glutamyl-tRNA(Asn/Gln) amidotransferase subunit B"/>
    <property type="match status" value="1"/>
</dbReference>
<dbReference type="Gene3D" id="1.10.10.410">
    <property type="match status" value="1"/>
</dbReference>
<dbReference type="Gene3D" id="1.10.150.380">
    <property type="entry name" value="GatB domain, N-terminal subdomain"/>
    <property type="match status" value="1"/>
</dbReference>
<dbReference type="HAMAP" id="MF_00121">
    <property type="entry name" value="GatB"/>
    <property type="match status" value="1"/>
</dbReference>
<dbReference type="InterPro" id="IPR017959">
    <property type="entry name" value="Asn/Gln-tRNA_amidoTrfase_suB/E"/>
</dbReference>
<dbReference type="InterPro" id="IPR006075">
    <property type="entry name" value="Asn/Gln-tRNA_Trfase_suB/E_cat"/>
</dbReference>
<dbReference type="InterPro" id="IPR018027">
    <property type="entry name" value="Asn/Gln_amidotransferase"/>
</dbReference>
<dbReference type="InterPro" id="IPR003789">
    <property type="entry name" value="Asn/Gln_tRNA_amidoTrase-B-like"/>
</dbReference>
<dbReference type="InterPro" id="IPR004413">
    <property type="entry name" value="GatB"/>
</dbReference>
<dbReference type="InterPro" id="IPR042114">
    <property type="entry name" value="GatB_C_1"/>
</dbReference>
<dbReference type="InterPro" id="IPR023168">
    <property type="entry name" value="GatB_Yqey_C_2"/>
</dbReference>
<dbReference type="InterPro" id="IPR017958">
    <property type="entry name" value="Gln-tRNA_amidoTrfase_suB_CS"/>
</dbReference>
<dbReference type="InterPro" id="IPR014746">
    <property type="entry name" value="Gln_synth/guanido_kin_cat_dom"/>
</dbReference>
<dbReference type="NCBIfam" id="TIGR00133">
    <property type="entry name" value="gatB"/>
    <property type="match status" value="1"/>
</dbReference>
<dbReference type="NCBIfam" id="NF004012">
    <property type="entry name" value="PRK05477.1-2"/>
    <property type="match status" value="1"/>
</dbReference>
<dbReference type="NCBIfam" id="NF004014">
    <property type="entry name" value="PRK05477.1-4"/>
    <property type="match status" value="1"/>
</dbReference>
<dbReference type="NCBIfam" id="NF004015">
    <property type="entry name" value="PRK05477.1-5"/>
    <property type="match status" value="1"/>
</dbReference>
<dbReference type="PANTHER" id="PTHR11659">
    <property type="entry name" value="GLUTAMYL-TRNA GLN AMIDOTRANSFERASE SUBUNIT B MITOCHONDRIAL AND PROKARYOTIC PET112-RELATED"/>
    <property type="match status" value="1"/>
</dbReference>
<dbReference type="PANTHER" id="PTHR11659:SF0">
    <property type="entry name" value="GLUTAMYL-TRNA(GLN) AMIDOTRANSFERASE SUBUNIT B, MITOCHONDRIAL"/>
    <property type="match status" value="1"/>
</dbReference>
<dbReference type="Pfam" id="PF02934">
    <property type="entry name" value="GatB_N"/>
    <property type="match status" value="1"/>
</dbReference>
<dbReference type="Pfam" id="PF02637">
    <property type="entry name" value="GatB_Yqey"/>
    <property type="match status" value="1"/>
</dbReference>
<dbReference type="SMART" id="SM00845">
    <property type="entry name" value="GatB_Yqey"/>
    <property type="match status" value="1"/>
</dbReference>
<dbReference type="SUPFAM" id="SSF89095">
    <property type="entry name" value="GatB/YqeY motif"/>
    <property type="match status" value="1"/>
</dbReference>
<dbReference type="SUPFAM" id="SSF55931">
    <property type="entry name" value="Glutamine synthetase/guanido kinase"/>
    <property type="match status" value="1"/>
</dbReference>
<dbReference type="PROSITE" id="PS01234">
    <property type="entry name" value="GATB"/>
    <property type="match status" value="1"/>
</dbReference>
<gene>
    <name evidence="1" type="primary">gatB</name>
    <name type="ordered locus">PSPPH_4175</name>
</gene>
<evidence type="ECO:0000255" key="1">
    <source>
        <dbReference type="HAMAP-Rule" id="MF_00121"/>
    </source>
</evidence>
<keyword id="KW-0067">ATP-binding</keyword>
<keyword id="KW-0436">Ligase</keyword>
<keyword id="KW-0547">Nucleotide-binding</keyword>
<keyword id="KW-0648">Protein biosynthesis</keyword>
<name>GATB_PSE14</name>
<proteinExistence type="inferred from homology"/>
<comment type="function">
    <text evidence="1">Allows the formation of correctly charged Asn-tRNA(Asn) or Gln-tRNA(Gln) through the transamidation of misacylated Asp-tRNA(Asn) or Glu-tRNA(Gln) in organisms which lack either or both of asparaginyl-tRNA or glutaminyl-tRNA synthetases. The reaction takes place in the presence of glutamine and ATP through an activated phospho-Asp-tRNA(Asn) or phospho-Glu-tRNA(Gln).</text>
</comment>
<comment type="catalytic activity">
    <reaction evidence="1">
        <text>L-glutamyl-tRNA(Gln) + L-glutamine + ATP + H2O = L-glutaminyl-tRNA(Gln) + L-glutamate + ADP + phosphate + H(+)</text>
        <dbReference type="Rhea" id="RHEA:17521"/>
        <dbReference type="Rhea" id="RHEA-COMP:9681"/>
        <dbReference type="Rhea" id="RHEA-COMP:9684"/>
        <dbReference type="ChEBI" id="CHEBI:15377"/>
        <dbReference type="ChEBI" id="CHEBI:15378"/>
        <dbReference type="ChEBI" id="CHEBI:29985"/>
        <dbReference type="ChEBI" id="CHEBI:30616"/>
        <dbReference type="ChEBI" id="CHEBI:43474"/>
        <dbReference type="ChEBI" id="CHEBI:58359"/>
        <dbReference type="ChEBI" id="CHEBI:78520"/>
        <dbReference type="ChEBI" id="CHEBI:78521"/>
        <dbReference type="ChEBI" id="CHEBI:456216"/>
    </reaction>
</comment>
<comment type="catalytic activity">
    <reaction evidence="1">
        <text>L-aspartyl-tRNA(Asn) + L-glutamine + ATP + H2O = L-asparaginyl-tRNA(Asn) + L-glutamate + ADP + phosphate + 2 H(+)</text>
        <dbReference type="Rhea" id="RHEA:14513"/>
        <dbReference type="Rhea" id="RHEA-COMP:9674"/>
        <dbReference type="Rhea" id="RHEA-COMP:9677"/>
        <dbReference type="ChEBI" id="CHEBI:15377"/>
        <dbReference type="ChEBI" id="CHEBI:15378"/>
        <dbReference type="ChEBI" id="CHEBI:29985"/>
        <dbReference type="ChEBI" id="CHEBI:30616"/>
        <dbReference type="ChEBI" id="CHEBI:43474"/>
        <dbReference type="ChEBI" id="CHEBI:58359"/>
        <dbReference type="ChEBI" id="CHEBI:78515"/>
        <dbReference type="ChEBI" id="CHEBI:78516"/>
        <dbReference type="ChEBI" id="CHEBI:456216"/>
    </reaction>
</comment>
<comment type="subunit">
    <text evidence="1">Heterotrimer of A, B and C subunits.</text>
</comment>
<comment type="similarity">
    <text evidence="1">Belongs to the GatB/GatE family. GatB subfamily.</text>
</comment>
<organism>
    <name type="scientific">Pseudomonas savastanoi pv. phaseolicola (strain 1448A / Race 6)</name>
    <name type="common">Pseudomonas syringae pv. phaseolicola (strain 1448A / Race 6)</name>
    <dbReference type="NCBI Taxonomy" id="264730"/>
    <lineage>
        <taxon>Bacteria</taxon>
        <taxon>Pseudomonadati</taxon>
        <taxon>Pseudomonadota</taxon>
        <taxon>Gammaproteobacteria</taxon>
        <taxon>Pseudomonadales</taxon>
        <taxon>Pseudomonadaceae</taxon>
        <taxon>Pseudomonas</taxon>
    </lineage>
</organism>